<sequence length="98" mass="10689">MKINQPAVAGTLESGDVMIRIAPLDTQDIDLQINSSVEKQFGDAIRTTILDVLARYNVRGVQLNVDDKGALDCILRARLEALLARASGIPALPWEDCQ</sequence>
<name>CITD_ECO27</name>
<gene>
    <name evidence="1" type="primary">citD</name>
    <name type="ordered locus">E2348C_0518</name>
</gene>
<evidence type="ECO:0000255" key="1">
    <source>
        <dbReference type="HAMAP-Rule" id="MF_00805"/>
    </source>
</evidence>
<dbReference type="EMBL" id="FM180568">
    <property type="protein sequence ID" value="CAS08066.1"/>
    <property type="molecule type" value="Genomic_DNA"/>
</dbReference>
<dbReference type="RefSeq" id="WP_000700703.1">
    <property type="nucleotide sequence ID" value="NC_011601.1"/>
</dbReference>
<dbReference type="SMR" id="B7UKQ9"/>
<dbReference type="GeneID" id="93776868"/>
<dbReference type="KEGG" id="ecg:E2348C_0518"/>
<dbReference type="HOGENOM" id="CLU_158489_0_0_6"/>
<dbReference type="Proteomes" id="UP000008205">
    <property type="component" value="Chromosome"/>
</dbReference>
<dbReference type="GO" id="GO:0005737">
    <property type="term" value="C:cytoplasm"/>
    <property type="evidence" value="ECO:0007669"/>
    <property type="project" value="UniProtKB-SubCell"/>
</dbReference>
<dbReference type="HAMAP" id="MF_00805">
    <property type="entry name" value="CitD"/>
    <property type="match status" value="1"/>
</dbReference>
<dbReference type="InterPro" id="IPR006495">
    <property type="entry name" value="CitD"/>
</dbReference>
<dbReference type="InterPro" id="IPR023439">
    <property type="entry name" value="Mal_deCO2ase/Cit_lyase_ACP"/>
</dbReference>
<dbReference type="NCBIfam" id="TIGR01608">
    <property type="entry name" value="citD"/>
    <property type="match status" value="1"/>
</dbReference>
<dbReference type="NCBIfam" id="NF009726">
    <property type="entry name" value="PRK13253.1"/>
    <property type="match status" value="1"/>
</dbReference>
<dbReference type="Pfam" id="PF06857">
    <property type="entry name" value="ACP"/>
    <property type="match status" value="1"/>
</dbReference>
<dbReference type="PIRSF" id="PIRSF002736">
    <property type="entry name" value="Citrt_lyas_gamma"/>
    <property type="match status" value="1"/>
</dbReference>
<proteinExistence type="inferred from homology"/>
<comment type="function">
    <text evidence="1">Covalent carrier of the coenzyme of citrate lyase.</text>
</comment>
<comment type="subunit">
    <text evidence="1">Oligomer with a subunit composition of (alpha,beta,gamma)6.</text>
</comment>
<comment type="subcellular location">
    <subcellularLocation>
        <location evidence="1">Cytoplasm</location>
    </subcellularLocation>
</comment>
<comment type="similarity">
    <text evidence="1">Belongs to the CitD family.</text>
</comment>
<organism>
    <name type="scientific">Escherichia coli O127:H6 (strain E2348/69 / EPEC)</name>
    <dbReference type="NCBI Taxonomy" id="574521"/>
    <lineage>
        <taxon>Bacteria</taxon>
        <taxon>Pseudomonadati</taxon>
        <taxon>Pseudomonadota</taxon>
        <taxon>Gammaproteobacteria</taxon>
        <taxon>Enterobacterales</taxon>
        <taxon>Enterobacteriaceae</taxon>
        <taxon>Escherichia</taxon>
    </lineage>
</organism>
<reference key="1">
    <citation type="journal article" date="2009" name="J. Bacteriol.">
        <title>Complete genome sequence and comparative genome analysis of enteropathogenic Escherichia coli O127:H6 strain E2348/69.</title>
        <authorList>
            <person name="Iguchi A."/>
            <person name="Thomson N.R."/>
            <person name="Ogura Y."/>
            <person name="Saunders D."/>
            <person name="Ooka T."/>
            <person name="Henderson I.R."/>
            <person name="Harris D."/>
            <person name="Asadulghani M."/>
            <person name="Kurokawa K."/>
            <person name="Dean P."/>
            <person name="Kenny B."/>
            <person name="Quail M.A."/>
            <person name="Thurston S."/>
            <person name="Dougan G."/>
            <person name="Hayashi T."/>
            <person name="Parkhill J."/>
            <person name="Frankel G."/>
        </authorList>
    </citation>
    <scope>NUCLEOTIDE SEQUENCE [LARGE SCALE GENOMIC DNA]</scope>
    <source>
        <strain>E2348/69 / EPEC</strain>
    </source>
</reference>
<accession>B7UKQ9</accession>
<feature type="chain" id="PRO_1000148560" description="Citrate lyase acyl carrier protein">
    <location>
        <begin position="1"/>
        <end position="98"/>
    </location>
</feature>
<feature type="modified residue" description="O-(phosphoribosyl dephospho-coenzyme A)serine" evidence="1">
    <location>
        <position position="14"/>
    </location>
</feature>
<protein>
    <recommendedName>
        <fullName evidence="1">Citrate lyase acyl carrier protein</fullName>
    </recommendedName>
    <alternativeName>
        <fullName evidence="1">Citrate lyase gamma chain</fullName>
    </alternativeName>
</protein>
<keyword id="KW-0963">Cytoplasm</keyword>
<keyword id="KW-0597">Phosphoprotein</keyword>
<keyword id="KW-1185">Reference proteome</keyword>